<keyword id="KW-0274">FAD</keyword>
<keyword id="KW-0285">Flavoprotein</keyword>
<keyword id="KW-0560">Oxidoreductase</keyword>
<keyword id="KW-1185">Reference proteome</keyword>
<keyword id="KW-0816">Tricarboxylic acid cycle</keyword>
<protein>
    <recommendedName>
        <fullName evidence="1">Probable malate:quinone oxidoreductase 2</fullName>
        <ecNumber evidence="1">1.1.5.4</ecNumber>
    </recommendedName>
    <alternativeName>
        <fullName evidence="1">MQO 2</fullName>
    </alternativeName>
    <alternativeName>
        <fullName evidence="1">Malate dehydrogenase [quinone] 2</fullName>
    </alternativeName>
</protein>
<sequence>MANKESKNVVIIGAGVLSTTFGSMIKELEPDWNIKLYERLDRPGIESSNERNNAGTGHAALCELNYTVQQPDGSIDIEKAKEINEQFEISKQFWGHLVKSGNISNPRDFINPLPHISFVRGKNNVKFLKNRYEAMRNFPMFDNIEYTEDIEEMRKWMPLMMTGRTGNEIMAASKIDEGTDVNYGELTRKMAKSIEKHPNADVQYNHEVINFNRRKDGIWEVKVKNRNSGDVETVLADYVFIGAGGGAIPLLQKTGIPESKHLGGFPISGQFLICTNPDVINEHDVKVYGKEPPGTPPMTVPHLDTRYIDGERTLLFGPFANIGPKFLRNGSNLDLFKSVKPYNITTLLASAVKNLPLIKYSIDQVLMTKEGCMNHLRTFYPEARDEDWQLYTAGKRVQVIKDTKEHGKGFIQFGTEVVNSKDHSVIALLGESPGASTSVSVALEVLEKNFAEYEKDWTPKLQKMIPSYGKSLIDDVKLMRATRKQTSKDLELNYYESK</sequence>
<name>MQO2_STAEQ</name>
<dbReference type="EC" id="1.1.5.4" evidence="1"/>
<dbReference type="EMBL" id="CP000029">
    <property type="protein sequence ID" value="AAW53215.1"/>
    <property type="molecule type" value="Genomic_DNA"/>
</dbReference>
<dbReference type="SMR" id="Q5HKN2"/>
<dbReference type="STRING" id="176279.SERP2312"/>
<dbReference type="KEGG" id="ser:SERP2312"/>
<dbReference type="eggNOG" id="COG0579">
    <property type="taxonomic scope" value="Bacteria"/>
</dbReference>
<dbReference type="HOGENOM" id="CLU_028151_0_0_9"/>
<dbReference type="UniPathway" id="UPA00223">
    <property type="reaction ID" value="UER01008"/>
</dbReference>
<dbReference type="Proteomes" id="UP000000531">
    <property type="component" value="Chromosome"/>
</dbReference>
<dbReference type="GO" id="GO:0047545">
    <property type="term" value="F:2-hydroxyglutarate dehydrogenase activity"/>
    <property type="evidence" value="ECO:0007669"/>
    <property type="project" value="TreeGrafter"/>
</dbReference>
<dbReference type="GO" id="GO:0008924">
    <property type="term" value="F:L-malate dehydrogenase (quinone) activity"/>
    <property type="evidence" value="ECO:0007669"/>
    <property type="project" value="UniProtKB-UniRule"/>
</dbReference>
<dbReference type="GO" id="GO:0006099">
    <property type="term" value="P:tricarboxylic acid cycle"/>
    <property type="evidence" value="ECO:0007669"/>
    <property type="project" value="UniProtKB-UniRule"/>
</dbReference>
<dbReference type="Gene3D" id="3.30.9.10">
    <property type="entry name" value="D-Amino Acid Oxidase, subunit A, domain 2"/>
    <property type="match status" value="1"/>
</dbReference>
<dbReference type="Gene3D" id="3.50.50.60">
    <property type="entry name" value="FAD/NAD(P)-binding domain"/>
    <property type="match status" value="1"/>
</dbReference>
<dbReference type="HAMAP" id="MF_00212">
    <property type="entry name" value="MQO"/>
    <property type="match status" value="1"/>
</dbReference>
<dbReference type="InterPro" id="IPR036188">
    <property type="entry name" value="FAD/NAD-bd_sf"/>
</dbReference>
<dbReference type="InterPro" id="IPR006231">
    <property type="entry name" value="MQO"/>
</dbReference>
<dbReference type="NCBIfam" id="NF040844">
    <property type="entry name" value="Lac_Quin_Ox_NO"/>
    <property type="match status" value="1"/>
</dbReference>
<dbReference type="NCBIfam" id="TIGR01320">
    <property type="entry name" value="mal_quin_oxido"/>
    <property type="match status" value="1"/>
</dbReference>
<dbReference type="NCBIfam" id="NF003606">
    <property type="entry name" value="PRK05257.2-1"/>
    <property type="match status" value="1"/>
</dbReference>
<dbReference type="NCBIfam" id="NF003611">
    <property type="entry name" value="PRK05257.3-2"/>
    <property type="match status" value="1"/>
</dbReference>
<dbReference type="NCBIfam" id="NF009875">
    <property type="entry name" value="PRK13339.1"/>
    <property type="match status" value="1"/>
</dbReference>
<dbReference type="PANTHER" id="PTHR43104">
    <property type="entry name" value="L-2-HYDROXYGLUTARATE DEHYDROGENASE, MITOCHONDRIAL"/>
    <property type="match status" value="1"/>
</dbReference>
<dbReference type="PANTHER" id="PTHR43104:SF2">
    <property type="entry name" value="L-2-HYDROXYGLUTARATE DEHYDROGENASE, MITOCHONDRIAL"/>
    <property type="match status" value="1"/>
</dbReference>
<dbReference type="Pfam" id="PF06039">
    <property type="entry name" value="Mqo"/>
    <property type="match status" value="1"/>
</dbReference>
<dbReference type="SUPFAM" id="SSF51905">
    <property type="entry name" value="FAD/NAD(P)-binding domain"/>
    <property type="match status" value="1"/>
</dbReference>
<gene>
    <name evidence="1" type="primary">mqo2</name>
    <name type="ordered locus">SERP2312</name>
</gene>
<proteinExistence type="inferred from homology"/>
<reference key="1">
    <citation type="journal article" date="2005" name="J. Bacteriol.">
        <title>Insights on evolution of virulence and resistance from the complete genome analysis of an early methicillin-resistant Staphylococcus aureus strain and a biofilm-producing methicillin-resistant Staphylococcus epidermidis strain.</title>
        <authorList>
            <person name="Gill S.R."/>
            <person name="Fouts D.E."/>
            <person name="Archer G.L."/>
            <person name="Mongodin E.F."/>
            <person name="DeBoy R.T."/>
            <person name="Ravel J."/>
            <person name="Paulsen I.T."/>
            <person name="Kolonay J.F."/>
            <person name="Brinkac L.M."/>
            <person name="Beanan M.J."/>
            <person name="Dodson R.J."/>
            <person name="Daugherty S.C."/>
            <person name="Madupu R."/>
            <person name="Angiuoli S.V."/>
            <person name="Durkin A.S."/>
            <person name="Haft D.H."/>
            <person name="Vamathevan J.J."/>
            <person name="Khouri H."/>
            <person name="Utterback T.R."/>
            <person name="Lee C."/>
            <person name="Dimitrov G."/>
            <person name="Jiang L."/>
            <person name="Qin H."/>
            <person name="Weidman J."/>
            <person name="Tran K."/>
            <person name="Kang K.H."/>
            <person name="Hance I.R."/>
            <person name="Nelson K.E."/>
            <person name="Fraser C.M."/>
        </authorList>
    </citation>
    <scope>NUCLEOTIDE SEQUENCE [LARGE SCALE GENOMIC DNA]</scope>
    <source>
        <strain>ATCC 35984 / DSM 28319 / BCRC 17069 / CCUG 31568 / BM 3577 / RP62A</strain>
    </source>
</reference>
<comment type="catalytic activity">
    <reaction evidence="1">
        <text>(S)-malate + a quinone = a quinol + oxaloacetate</text>
        <dbReference type="Rhea" id="RHEA:46012"/>
        <dbReference type="ChEBI" id="CHEBI:15589"/>
        <dbReference type="ChEBI" id="CHEBI:16452"/>
        <dbReference type="ChEBI" id="CHEBI:24646"/>
        <dbReference type="ChEBI" id="CHEBI:132124"/>
        <dbReference type="EC" id="1.1.5.4"/>
    </reaction>
</comment>
<comment type="cofactor">
    <cofactor evidence="1">
        <name>FAD</name>
        <dbReference type="ChEBI" id="CHEBI:57692"/>
    </cofactor>
</comment>
<comment type="pathway">
    <text evidence="1">Carbohydrate metabolism; tricarboxylic acid cycle; oxaloacetate from (S)-malate (quinone route): step 1/1.</text>
</comment>
<comment type="similarity">
    <text evidence="1">Belongs to the MQO family.</text>
</comment>
<evidence type="ECO:0000255" key="1">
    <source>
        <dbReference type="HAMAP-Rule" id="MF_00212"/>
    </source>
</evidence>
<organism>
    <name type="scientific">Staphylococcus epidermidis (strain ATCC 35984 / DSM 28319 / BCRC 17069 / CCUG 31568 / BM 3577 / RP62A)</name>
    <dbReference type="NCBI Taxonomy" id="176279"/>
    <lineage>
        <taxon>Bacteria</taxon>
        <taxon>Bacillati</taxon>
        <taxon>Bacillota</taxon>
        <taxon>Bacilli</taxon>
        <taxon>Bacillales</taxon>
        <taxon>Staphylococcaceae</taxon>
        <taxon>Staphylococcus</taxon>
    </lineage>
</organism>
<accession>Q5HKN2</accession>
<feature type="chain" id="PRO_0000128754" description="Probable malate:quinone oxidoreductase 2">
    <location>
        <begin position="1"/>
        <end position="498"/>
    </location>
</feature>